<reference key="1">
    <citation type="journal article" date="2007" name="Nat. Genet.">
        <title>Comparative genomic analysis of three Leishmania species that cause diverse human disease.</title>
        <authorList>
            <person name="Peacock C.S."/>
            <person name="Seeger K."/>
            <person name="Harris D."/>
            <person name="Murphy L."/>
            <person name="Ruiz J.C."/>
            <person name="Quail M.A."/>
            <person name="Peters N."/>
            <person name="Adlem E."/>
            <person name="Tivey A."/>
            <person name="Aslett M."/>
            <person name="Kerhornou A."/>
            <person name="Ivens A."/>
            <person name="Fraser A."/>
            <person name="Rajandream M.-A."/>
            <person name="Carver T."/>
            <person name="Norbertczak H."/>
            <person name="Chillingworth T."/>
            <person name="Hance Z."/>
            <person name="Jagels K."/>
            <person name="Moule S."/>
            <person name="Ormond D."/>
            <person name="Rutter S."/>
            <person name="Sqaures R."/>
            <person name="Whitehead S."/>
            <person name="Rabbinowitsch E."/>
            <person name="Arrowsmith C."/>
            <person name="White B."/>
            <person name="Thurston S."/>
            <person name="Bringaud F."/>
            <person name="Baldauf S.L."/>
            <person name="Faulconbridge A."/>
            <person name="Jeffares D."/>
            <person name="Depledge D.P."/>
            <person name="Oyola S.O."/>
            <person name="Hilley J.D."/>
            <person name="Brito L.O."/>
            <person name="Tosi L.R.O."/>
            <person name="Barrell B."/>
            <person name="Cruz A.K."/>
            <person name="Mottram J.C."/>
            <person name="Smith D.F."/>
            <person name="Berriman M."/>
        </authorList>
    </citation>
    <scope>NUCLEOTIDE SEQUENCE [LARGE SCALE GENOMIC DNA]</scope>
    <source>
        <strain>MHOM/BR/75/M2904</strain>
    </source>
</reference>
<proteinExistence type="inferred from homology"/>
<protein>
    <recommendedName>
        <fullName>Thymine dioxygenase JBP1</fullName>
        <ecNumber evidence="2">1.14.11.6</ecNumber>
    </recommendedName>
    <alternativeName>
        <fullName>J-binding protein 1</fullName>
    </alternativeName>
    <alternativeName>
        <fullName>Thymidine hydroxylase JBP1</fullName>
    </alternativeName>
</protein>
<evidence type="ECO:0000250" key="1">
    <source>
        <dbReference type="UniProtKB" id="Q6N021"/>
    </source>
</evidence>
<evidence type="ECO:0000250" key="2">
    <source>
        <dbReference type="UniProtKB" id="Q9U6M1"/>
    </source>
</evidence>
<evidence type="ECO:0000305" key="3"/>
<accession>A4H5X5</accession>
<keyword id="KW-0223">Dioxygenase</keyword>
<keyword id="KW-0238">DNA-binding</keyword>
<keyword id="KW-0408">Iron</keyword>
<keyword id="KW-0479">Metal-binding</keyword>
<keyword id="KW-0539">Nucleus</keyword>
<keyword id="KW-0560">Oxidoreductase</keyword>
<keyword id="KW-1185">Reference proteome</keyword>
<gene>
    <name type="primary">JBP1</name>
    <name type="ORF">LbrM09_V2.1540</name>
    <name type="ORF">LbrM_09_1540</name>
</gene>
<organism>
    <name type="scientific">Leishmania braziliensis</name>
    <dbReference type="NCBI Taxonomy" id="5660"/>
    <lineage>
        <taxon>Eukaryota</taxon>
        <taxon>Discoba</taxon>
        <taxon>Euglenozoa</taxon>
        <taxon>Kinetoplastea</taxon>
        <taxon>Metakinetoplastina</taxon>
        <taxon>Trypanosomatida</taxon>
        <taxon>Trypanosomatidae</taxon>
        <taxon>Leishmaniinae</taxon>
        <taxon>Leishmania</taxon>
        <taxon>Leishmania braziliensis species complex</taxon>
    </lineage>
</organism>
<feature type="chain" id="PRO_0000377551" description="Thymine dioxygenase JBP1">
    <location>
        <begin position="1"/>
        <end position="813"/>
    </location>
</feature>
<feature type="region of interest" description="Thymine dioxygenase" evidence="2">
    <location>
        <begin position="62"/>
        <end position="264"/>
    </location>
</feature>
<feature type="region of interest" description="DNA-binding JBP1 domain" evidence="2">
    <location>
        <begin position="392"/>
        <end position="561"/>
    </location>
</feature>
<feature type="binding site" evidence="1">
    <location>
        <position position="189"/>
    </location>
    <ligand>
        <name>Fe cation</name>
        <dbReference type="ChEBI" id="CHEBI:24875"/>
        <note>catalytic</note>
    </ligand>
</feature>
<feature type="binding site" evidence="1">
    <location>
        <position position="191"/>
    </location>
    <ligand>
        <name>Fe cation</name>
        <dbReference type="ChEBI" id="CHEBI:24875"/>
        <note>catalytic</note>
    </ligand>
</feature>
<feature type="binding site" evidence="1">
    <location>
        <position position="239"/>
    </location>
    <ligand>
        <name>Fe cation</name>
        <dbReference type="ChEBI" id="CHEBI:24875"/>
        <note>catalytic</note>
    </ligand>
</feature>
<feature type="binding site" evidence="1">
    <location>
        <position position="255"/>
    </location>
    <ligand>
        <name>2-oxoglutarate</name>
        <dbReference type="ChEBI" id="CHEBI:16810"/>
    </ligand>
</feature>
<feature type="site" description="Involved in J base recognition, conferring specificity towards J-DNA" evidence="2">
    <location>
        <position position="525"/>
    </location>
</feature>
<sequence length="813" mass="92367">MESSTKRIKMDIFNFPTIKETRTPEEVAESYAEAVKLHPFYDNAHCVIDFYDSGTIKDGRGEIIGVVLRKALPKYATSMASALLISAAVRTSLRSMIFGGESPLSGIAGYFDYRGSPVELKSRKTSFTYEHEEAWSAVFPVVDYVSEIYRHVAPERWKAQNNAIPDLVRIHGTPFSTLTINSRFRTASHTDVGDFDAGYSCIACIDGKFKGLALTFDDFRINVLMQPRDVMVFDSHHFHSNTEVEVSCSEEDWKRLTCVFYYRTALGEPSSYAEYRRRLEKSKQDPSFTPVVSNVMMKENGTNLNRPSPVHPVPPSPFWLPMLAHCLQHCASAAQSVHEAMTADGSQLAEIIFGEPLSTSDGIPLRGDDEKLKANGDTGAKPLSRLGGFSETDLMVSTAAEKRKYLDSEFLSHCISAQLLDMWKQARARWLELVGKEWKHMLTLNPERKDFLWKNRSEMNSAFFDLCEVGKQVMLGLLDKEAALPKEEQAFWTMYAVHLSAACAEELHMPHDAMSLRKLNVKLKDFNFGGTRYFKDMPPEEQQRRMERKQRIEEARRHGMTGAHEKRANWLTNDSFDYQTEDCVVDYAKHKWVLPERHAKAVTKNVHTAWLPTREEVVRVLVVLPDLQIRVEGVDCKLEKPDTVEDSSEWVRLVSSPAVHRLLAAAQRNLQLPDDVMHGNIHIRFVFHSTLPTDMYDFVVLQHVLSRIPDDVLASSYITRAAALCSGCLFVEETDVQCRQYYTLKYSIRRNYDAVAPHFFQQLHQASYGTKMARVRTKGELEALIPTVCCARYKLQGSPLNTTIHVVSPTAPH</sequence>
<dbReference type="EC" id="1.14.11.6" evidence="2"/>
<dbReference type="EMBL" id="FR798983">
    <property type="protein sequence ID" value="CAM41892.1"/>
    <property type="molecule type" value="Genomic_DNA"/>
</dbReference>
<dbReference type="RefSeq" id="XP_001562766.1">
    <property type="nucleotide sequence ID" value="XM_001562716.1"/>
</dbReference>
<dbReference type="SMR" id="A4H5X5"/>
<dbReference type="GeneID" id="5413245"/>
<dbReference type="KEGG" id="lbz:LBRM_09_1540"/>
<dbReference type="VEuPathDB" id="TriTrypDB:LbrM.09.1540"/>
<dbReference type="InParanoid" id="A4H5X5"/>
<dbReference type="OMA" id="LCEVGKQ"/>
<dbReference type="Proteomes" id="UP000007258">
    <property type="component" value="Chromosome 9"/>
</dbReference>
<dbReference type="GO" id="GO:0005634">
    <property type="term" value="C:nucleus"/>
    <property type="evidence" value="ECO:0007669"/>
    <property type="project" value="UniProtKB-SubCell"/>
</dbReference>
<dbReference type="GO" id="GO:0003677">
    <property type="term" value="F:DNA binding"/>
    <property type="evidence" value="ECO:0007669"/>
    <property type="project" value="UniProtKB-KW"/>
</dbReference>
<dbReference type="GO" id="GO:0046872">
    <property type="term" value="F:metal ion binding"/>
    <property type="evidence" value="ECO:0007669"/>
    <property type="project" value="UniProtKB-KW"/>
</dbReference>
<dbReference type="GO" id="GO:0050341">
    <property type="term" value="F:thymine dioxygenase activity"/>
    <property type="evidence" value="ECO:0007669"/>
    <property type="project" value="UniProtKB-EC"/>
</dbReference>
<dbReference type="GO" id="GO:0070580">
    <property type="term" value="P:base J metabolic process"/>
    <property type="evidence" value="ECO:0007669"/>
    <property type="project" value="UniProtKB-ARBA"/>
</dbReference>
<dbReference type="FunFam" id="1.20.120.1440:FF:000001">
    <property type="entry name" value="Thymine dioxygenase JBP1"/>
    <property type="match status" value="1"/>
</dbReference>
<dbReference type="Gene3D" id="3.60.130.30">
    <property type="match status" value="1"/>
</dbReference>
<dbReference type="Gene3D" id="1.20.120.1440">
    <property type="entry name" value="JBP1, DNA-binding domain"/>
    <property type="match status" value="1"/>
</dbReference>
<dbReference type="InterPro" id="IPR024779">
    <property type="entry name" value="2OGFeDO_JBP1/TET_oxygenase_dom"/>
</dbReference>
<dbReference type="InterPro" id="IPR041241">
    <property type="entry name" value="DB_JBP1"/>
</dbReference>
<dbReference type="InterPro" id="IPR043111">
    <property type="entry name" value="DB_JBP1_sf"/>
</dbReference>
<dbReference type="Pfam" id="PF18526">
    <property type="entry name" value="DB_JBP1"/>
    <property type="match status" value="1"/>
</dbReference>
<dbReference type="Pfam" id="PF12851">
    <property type="entry name" value="Tet_JBP"/>
    <property type="match status" value="1"/>
</dbReference>
<comment type="function">
    <text evidence="2">Dioxygenase that catalyzes the first step of DNA base J (beta-d-glucosyl-HOMedU) biosynthesis by converting thymine to 5-hydroxymethyluracil (HOMedU). DNA base J is a hypermodified thymidine residue found in the genome of kinetoplastid parasites, which is localized primarily to repetitive DNA, namely the telomeres, and is implicated in the regulation of antigenic variation. Also specifically binds to base J-containing DNA (J-DNA). Involved in propagation and maintenance of DNA base J synthesis initiated by JBP2 by specifically binding already synthesized DNA base J and propagating J synthesis. Thymine dioxygenase activity and J-DNA-binding are independent functions (By similarity).</text>
</comment>
<comment type="catalytic activity">
    <reaction evidence="2">
        <text>thymine + 2-oxoglutarate + O2 = 5-hydroxymethyluracil + succinate + CO2</text>
        <dbReference type="Rhea" id="RHEA:10316"/>
        <dbReference type="ChEBI" id="CHEBI:15379"/>
        <dbReference type="ChEBI" id="CHEBI:16526"/>
        <dbReference type="ChEBI" id="CHEBI:16810"/>
        <dbReference type="ChEBI" id="CHEBI:16964"/>
        <dbReference type="ChEBI" id="CHEBI:17821"/>
        <dbReference type="ChEBI" id="CHEBI:30031"/>
        <dbReference type="EC" id="1.14.11.6"/>
    </reaction>
</comment>
<comment type="cofactor">
    <cofactor evidence="1">
        <name>Fe(2+)</name>
        <dbReference type="ChEBI" id="CHEBI:29033"/>
    </cofactor>
    <text evidence="1">Binds 1 Fe(2+) ion per subunit.</text>
</comment>
<comment type="subunit">
    <text evidence="2">Monomer. Binds to DNA as a monomer (By similarity).</text>
</comment>
<comment type="subcellular location">
    <subcellularLocation>
        <location evidence="2">Nucleus</location>
    </subcellularLocation>
</comment>
<comment type="domain">
    <text evidence="2">The DNA-binding JBP1 domain (DB-JBP1) is necessary and sufficient for binding to J-DNA.</text>
</comment>
<comment type="similarity">
    <text evidence="3">Belongs to the TET family. JBP1 subfamily.</text>
</comment>
<name>JBP1_LEIBR</name>